<accession>Q664X5</accession>
<comment type="function">
    <text evidence="1">Part of the ABC transporter complex MalEFGK involved in maltose/maltodextrin import. Responsible for energy coupling to the transport system.</text>
</comment>
<comment type="catalytic activity">
    <reaction evidence="1">
        <text>D-maltose(out) + ATP + H2O = D-maltose(in) + ADP + phosphate + H(+)</text>
        <dbReference type="Rhea" id="RHEA:22132"/>
        <dbReference type="ChEBI" id="CHEBI:15377"/>
        <dbReference type="ChEBI" id="CHEBI:15378"/>
        <dbReference type="ChEBI" id="CHEBI:17306"/>
        <dbReference type="ChEBI" id="CHEBI:30616"/>
        <dbReference type="ChEBI" id="CHEBI:43474"/>
        <dbReference type="ChEBI" id="CHEBI:456216"/>
        <dbReference type="EC" id="7.5.2.1"/>
    </reaction>
</comment>
<comment type="subunit">
    <text evidence="1">The complex is composed of two ATP-binding proteins (MalK), two transmembrane proteins (MalG and MalK) and a solute-binding protein (MalE).</text>
</comment>
<comment type="subcellular location">
    <subcellularLocation>
        <location evidence="1">Cell inner membrane</location>
        <topology evidence="1">Peripheral membrane protein</topology>
    </subcellularLocation>
</comment>
<comment type="similarity">
    <text evidence="1">Belongs to the ABC transporter superfamily. Maltooligosaccharide importer (TC 3.A.1.1.1) family.</text>
</comment>
<feature type="chain" id="PRO_0000274004" description="Maltose/maltodextrin import ATP-binding protein MalK">
    <location>
        <begin position="1"/>
        <end position="369"/>
    </location>
</feature>
<feature type="domain" description="ABC transporter" evidence="1">
    <location>
        <begin position="4"/>
        <end position="234"/>
    </location>
</feature>
<feature type="binding site" evidence="1">
    <location>
        <begin position="36"/>
        <end position="43"/>
    </location>
    <ligand>
        <name>ATP</name>
        <dbReference type="ChEBI" id="CHEBI:30616"/>
    </ligand>
</feature>
<organism>
    <name type="scientific">Yersinia pseudotuberculosis serotype I (strain IP32953)</name>
    <dbReference type="NCBI Taxonomy" id="273123"/>
    <lineage>
        <taxon>Bacteria</taxon>
        <taxon>Pseudomonadati</taxon>
        <taxon>Pseudomonadota</taxon>
        <taxon>Gammaproteobacteria</taxon>
        <taxon>Enterobacterales</taxon>
        <taxon>Yersiniaceae</taxon>
        <taxon>Yersinia</taxon>
    </lineage>
</organism>
<protein>
    <recommendedName>
        <fullName evidence="1">Maltose/maltodextrin import ATP-binding protein MalK</fullName>
        <ecNumber evidence="1">7.5.2.1</ecNumber>
    </recommendedName>
</protein>
<sequence length="369" mass="40839">MANVTLSSVYKAFGEAVISRDINLEIDDGEFVVFVGPSGCGKSTLLRMIAGLEDITSGELLIGGKRMNEVPPSERGIGMVFQSYALYPHLSVAENMSFGLKLAGVKKAEIYQRVNQVAEVLQLAHLLDRRPKALSGGQRQRVAIGRTLVSEPDVFLLDEPLSNLDAALRVQMRIEISRLHKRLERTMIYVTHDQVEAMTLADKIVVLDAGNIAQVGKPLELYHYPANRFVAGFIGSPKMNFLPVKVTAAEPRQVQIELPNHQRVWLPVEGDQVQVGANMSLGIRPEHLLPSSASEVTLEGEIQVVEQLGNETQIHIQIPAIRQNLVYRQNDVVLVEEGATFSIGLPPHRCHLFREDGTACKRLYQELGV</sequence>
<name>MALK_YERPS</name>
<proteinExistence type="inferred from homology"/>
<keyword id="KW-0067">ATP-binding</keyword>
<keyword id="KW-0997">Cell inner membrane</keyword>
<keyword id="KW-1003">Cell membrane</keyword>
<keyword id="KW-0472">Membrane</keyword>
<keyword id="KW-0547">Nucleotide-binding</keyword>
<keyword id="KW-0762">Sugar transport</keyword>
<keyword id="KW-1278">Translocase</keyword>
<keyword id="KW-0813">Transport</keyword>
<gene>
    <name evidence="1" type="primary">malK</name>
    <name type="ordered locus">YPTB3643</name>
</gene>
<dbReference type="EC" id="7.5.2.1" evidence="1"/>
<dbReference type="EMBL" id="BX936398">
    <property type="protein sequence ID" value="CAH22881.1"/>
    <property type="molecule type" value="Genomic_DNA"/>
</dbReference>
<dbReference type="RefSeq" id="WP_002212091.1">
    <property type="nucleotide sequence ID" value="NZ_CP009712.1"/>
</dbReference>
<dbReference type="SMR" id="Q664X5"/>
<dbReference type="GeneID" id="96663134"/>
<dbReference type="KEGG" id="ypo:BZ17_2955"/>
<dbReference type="KEGG" id="yps:YPTB3643"/>
<dbReference type="PATRIC" id="fig|273123.14.peg.3089"/>
<dbReference type="Proteomes" id="UP000001011">
    <property type="component" value="Chromosome"/>
</dbReference>
<dbReference type="GO" id="GO:0055052">
    <property type="term" value="C:ATP-binding cassette (ABC) transporter complex, substrate-binding subunit-containing"/>
    <property type="evidence" value="ECO:0007669"/>
    <property type="project" value="TreeGrafter"/>
</dbReference>
<dbReference type="GO" id="GO:1990060">
    <property type="term" value="C:maltose transport complex"/>
    <property type="evidence" value="ECO:0007669"/>
    <property type="project" value="TreeGrafter"/>
</dbReference>
<dbReference type="GO" id="GO:0015423">
    <property type="term" value="F:ABC-type maltose transporter activity"/>
    <property type="evidence" value="ECO:0007669"/>
    <property type="project" value="UniProtKB-EC"/>
</dbReference>
<dbReference type="GO" id="GO:0005524">
    <property type="term" value="F:ATP binding"/>
    <property type="evidence" value="ECO:0007669"/>
    <property type="project" value="UniProtKB-KW"/>
</dbReference>
<dbReference type="GO" id="GO:0016887">
    <property type="term" value="F:ATP hydrolysis activity"/>
    <property type="evidence" value="ECO:0007669"/>
    <property type="project" value="InterPro"/>
</dbReference>
<dbReference type="CDD" id="cd03301">
    <property type="entry name" value="ABC_MalK_N"/>
    <property type="match status" value="1"/>
</dbReference>
<dbReference type="FunFam" id="3.40.50.300:FF:000042">
    <property type="entry name" value="Maltose/maltodextrin ABC transporter, ATP-binding protein"/>
    <property type="match status" value="1"/>
</dbReference>
<dbReference type="FunFam" id="2.40.50.100:FF:000014">
    <property type="entry name" value="Maltose/maltodextrin import ATP-binding protein MalK"/>
    <property type="match status" value="1"/>
</dbReference>
<dbReference type="Gene3D" id="2.40.50.100">
    <property type="match status" value="1"/>
</dbReference>
<dbReference type="Gene3D" id="2.40.50.140">
    <property type="entry name" value="Nucleic acid-binding proteins"/>
    <property type="match status" value="1"/>
</dbReference>
<dbReference type="Gene3D" id="3.40.50.300">
    <property type="entry name" value="P-loop containing nucleotide triphosphate hydrolases"/>
    <property type="match status" value="1"/>
</dbReference>
<dbReference type="InterPro" id="IPR003593">
    <property type="entry name" value="AAA+_ATPase"/>
</dbReference>
<dbReference type="InterPro" id="IPR003439">
    <property type="entry name" value="ABC_transporter-like_ATP-bd"/>
</dbReference>
<dbReference type="InterPro" id="IPR017871">
    <property type="entry name" value="ABC_transporter-like_CS"/>
</dbReference>
<dbReference type="InterPro" id="IPR015855">
    <property type="entry name" value="ABC_transpr_MalK-like"/>
</dbReference>
<dbReference type="InterPro" id="IPR047641">
    <property type="entry name" value="ABC_transpr_MalK/UgpC-like"/>
</dbReference>
<dbReference type="InterPro" id="IPR008995">
    <property type="entry name" value="Mo/tungstate-bd_C_term_dom"/>
</dbReference>
<dbReference type="InterPro" id="IPR012340">
    <property type="entry name" value="NA-bd_OB-fold"/>
</dbReference>
<dbReference type="InterPro" id="IPR040582">
    <property type="entry name" value="OB_MalK-like"/>
</dbReference>
<dbReference type="InterPro" id="IPR027417">
    <property type="entry name" value="P-loop_NTPase"/>
</dbReference>
<dbReference type="NCBIfam" id="NF008233">
    <property type="entry name" value="PRK11000.1"/>
    <property type="match status" value="1"/>
</dbReference>
<dbReference type="NCBIfam" id="NF008653">
    <property type="entry name" value="PRK11650.1"/>
    <property type="match status" value="1"/>
</dbReference>
<dbReference type="PANTHER" id="PTHR43875">
    <property type="entry name" value="MALTODEXTRIN IMPORT ATP-BINDING PROTEIN MSMX"/>
    <property type="match status" value="1"/>
</dbReference>
<dbReference type="PANTHER" id="PTHR43875:SF3">
    <property type="entry name" value="MALTOSE_MALTODEXTRIN IMPORT ATP-BINDING PROTEIN MALK"/>
    <property type="match status" value="1"/>
</dbReference>
<dbReference type="Pfam" id="PF00005">
    <property type="entry name" value="ABC_tran"/>
    <property type="match status" value="1"/>
</dbReference>
<dbReference type="Pfam" id="PF17912">
    <property type="entry name" value="OB_MalK"/>
    <property type="match status" value="1"/>
</dbReference>
<dbReference type="SMART" id="SM00382">
    <property type="entry name" value="AAA"/>
    <property type="match status" value="1"/>
</dbReference>
<dbReference type="SUPFAM" id="SSF50331">
    <property type="entry name" value="MOP-like"/>
    <property type="match status" value="1"/>
</dbReference>
<dbReference type="SUPFAM" id="SSF52540">
    <property type="entry name" value="P-loop containing nucleoside triphosphate hydrolases"/>
    <property type="match status" value="1"/>
</dbReference>
<dbReference type="PROSITE" id="PS00211">
    <property type="entry name" value="ABC_TRANSPORTER_1"/>
    <property type="match status" value="1"/>
</dbReference>
<dbReference type="PROSITE" id="PS50893">
    <property type="entry name" value="ABC_TRANSPORTER_2"/>
    <property type="match status" value="1"/>
</dbReference>
<dbReference type="PROSITE" id="PS51245">
    <property type="entry name" value="MALK"/>
    <property type="match status" value="1"/>
</dbReference>
<evidence type="ECO:0000255" key="1">
    <source>
        <dbReference type="HAMAP-Rule" id="MF_01709"/>
    </source>
</evidence>
<reference key="1">
    <citation type="journal article" date="2004" name="Proc. Natl. Acad. Sci. U.S.A.">
        <title>Insights into the evolution of Yersinia pestis through whole-genome comparison with Yersinia pseudotuberculosis.</title>
        <authorList>
            <person name="Chain P.S.G."/>
            <person name="Carniel E."/>
            <person name="Larimer F.W."/>
            <person name="Lamerdin J."/>
            <person name="Stoutland P.O."/>
            <person name="Regala W.M."/>
            <person name="Georgescu A.M."/>
            <person name="Vergez L.M."/>
            <person name="Land M.L."/>
            <person name="Motin V.L."/>
            <person name="Brubaker R.R."/>
            <person name="Fowler J."/>
            <person name="Hinnebusch J."/>
            <person name="Marceau M."/>
            <person name="Medigue C."/>
            <person name="Simonet M."/>
            <person name="Chenal-Francisque V."/>
            <person name="Souza B."/>
            <person name="Dacheux D."/>
            <person name="Elliott J.M."/>
            <person name="Derbise A."/>
            <person name="Hauser L.J."/>
            <person name="Garcia E."/>
        </authorList>
    </citation>
    <scope>NUCLEOTIDE SEQUENCE [LARGE SCALE GENOMIC DNA]</scope>
    <source>
        <strain>IP32953</strain>
    </source>
</reference>